<evidence type="ECO:0000255" key="1">
    <source>
        <dbReference type="HAMAP-Rule" id="MF_01152"/>
    </source>
</evidence>
<feature type="chain" id="PRO_1000085335" description="Chaperone protein DnaJ">
    <location>
        <begin position="1"/>
        <end position="379"/>
    </location>
</feature>
<feature type="domain" description="J" evidence="1">
    <location>
        <begin position="5"/>
        <end position="70"/>
    </location>
</feature>
<feature type="repeat" description="CXXCXGXG motif">
    <location>
        <begin position="147"/>
        <end position="154"/>
    </location>
</feature>
<feature type="repeat" description="CXXCXGXG motif">
    <location>
        <begin position="164"/>
        <end position="171"/>
    </location>
</feature>
<feature type="repeat" description="CXXCXGXG motif">
    <location>
        <begin position="186"/>
        <end position="193"/>
    </location>
</feature>
<feature type="repeat" description="CXXCXGXG motif">
    <location>
        <begin position="200"/>
        <end position="207"/>
    </location>
</feature>
<feature type="zinc finger region" description="CR-type" evidence="1">
    <location>
        <begin position="134"/>
        <end position="212"/>
    </location>
</feature>
<feature type="binding site" evidence="1">
    <location>
        <position position="147"/>
    </location>
    <ligand>
        <name>Zn(2+)</name>
        <dbReference type="ChEBI" id="CHEBI:29105"/>
        <label>1</label>
    </ligand>
</feature>
<feature type="binding site" evidence="1">
    <location>
        <position position="150"/>
    </location>
    <ligand>
        <name>Zn(2+)</name>
        <dbReference type="ChEBI" id="CHEBI:29105"/>
        <label>1</label>
    </ligand>
</feature>
<feature type="binding site" evidence="1">
    <location>
        <position position="164"/>
    </location>
    <ligand>
        <name>Zn(2+)</name>
        <dbReference type="ChEBI" id="CHEBI:29105"/>
        <label>2</label>
    </ligand>
</feature>
<feature type="binding site" evidence="1">
    <location>
        <position position="167"/>
    </location>
    <ligand>
        <name>Zn(2+)</name>
        <dbReference type="ChEBI" id="CHEBI:29105"/>
        <label>2</label>
    </ligand>
</feature>
<feature type="binding site" evidence="1">
    <location>
        <position position="186"/>
    </location>
    <ligand>
        <name>Zn(2+)</name>
        <dbReference type="ChEBI" id="CHEBI:29105"/>
        <label>2</label>
    </ligand>
</feature>
<feature type="binding site" evidence="1">
    <location>
        <position position="189"/>
    </location>
    <ligand>
        <name>Zn(2+)</name>
        <dbReference type="ChEBI" id="CHEBI:29105"/>
        <label>2</label>
    </ligand>
</feature>
<feature type="binding site" evidence="1">
    <location>
        <position position="200"/>
    </location>
    <ligand>
        <name>Zn(2+)</name>
        <dbReference type="ChEBI" id="CHEBI:29105"/>
        <label>1</label>
    </ligand>
</feature>
<feature type="binding site" evidence="1">
    <location>
        <position position="203"/>
    </location>
    <ligand>
        <name>Zn(2+)</name>
        <dbReference type="ChEBI" id="CHEBI:29105"/>
        <label>1</label>
    </ligand>
</feature>
<reference key="1">
    <citation type="journal article" date="2006" name="J. Bacteriol.">
        <title>Complete genome sequence of Yersinia pestis strains Antiqua and Nepal516: evidence of gene reduction in an emerging pathogen.</title>
        <authorList>
            <person name="Chain P.S.G."/>
            <person name="Hu P."/>
            <person name="Malfatti S.A."/>
            <person name="Radnedge L."/>
            <person name="Larimer F."/>
            <person name="Vergez L.M."/>
            <person name="Worsham P."/>
            <person name="Chu M.C."/>
            <person name="Andersen G.L."/>
        </authorList>
    </citation>
    <scope>NUCLEOTIDE SEQUENCE [LARGE SCALE GENOMIC DNA]</scope>
    <source>
        <strain>Nepal516</strain>
    </source>
</reference>
<reference key="2">
    <citation type="submission" date="2009-04" db="EMBL/GenBank/DDBJ databases">
        <title>Yersinia pestis Nepal516A whole genome shotgun sequencing project.</title>
        <authorList>
            <person name="Plunkett G. III"/>
            <person name="Anderson B.D."/>
            <person name="Baumler D.J."/>
            <person name="Burland V."/>
            <person name="Cabot E.L."/>
            <person name="Glasner J.D."/>
            <person name="Mau B."/>
            <person name="Neeno-Eckwall E."/>
            <person name="Perna N.T."/>
            <person name="Munk A.C."/>
            <person name="Tapia R."/>
            <person name="Green L.D."/>
            <person name="Rogers Y.C."/>
            <person name="Detter J.C."/>
            <person name="Bruce D.C."/>
            <person name="Brettin T.S."/>
        </authorList>
    </citation>
    <scope>NUCLEOTIDE SEQUENCE [LARGE SCALE GENOMIC DNA]</scope>
    <source>
        <strain>Nepal516</strain>
    </source>
</reference>
<sequence>MAKRDYYEVLGVSRDAEEREIKKAYKRLAMKFHPDRQSEDKNAEEKFKEAKEAYEILTDAQKRAAYDQYGHAAFEQGGMGGGGFGGGGGGADFSDIFGDVFGDIFGGGRRQQRASRGSDLRYNMDLTLEEAVRGVTKEIRIPTLDECDVCHGSGAKPGSSPVTCPTCHGAGQVQMRQGFFTVQQACPHCHGRGQIIKDPCNKCHGHGRVEKSKTLSVKIPAGVDTGDRIRLSGEGEAGEHGAPSGDLYVQVQVKAHPIFEREGNNLYCEVPINFAMAALGGEIEVPTLDGRVKLKIPAETQTGKMFRMRGKGVKSVRGGSQGDLLCRVVVETPVSLSEKQKQLLRELEESFVGAAGEKNSPRAKSFLDGVKKFFDDLTR</sequence>
<name>DNAJ_YERPN</name>
<comment type="function">
    <text evidence="1">Participates actively in the response to hyperosmotic and heat shock by preventing the aggregation of stress-denatured proteins and by disaggregating proteins, also in an autonomous, DnaK-independent fashion. Unfolded proteins bind initially to DnaJ; upon interaction with the DnaJ-bound protein, DnaK hydrolyzes its bound ATP, resulting in the formation of a stable complex. GrpE releases ADP from DnaK; ATP binding to DnaK triggers the release of the substrate protein, thus completing the reaction cycle. Several rounds of ATP-dependent interactions between DnaJ, DnaK and GrpE are required for fully efficient folding. Also involved, together with DnaK and GrpE, in the DNA replication of plasmids through activation of initiation proteins.</text>
</comment>
<comment type="cofactor">
    <cofactor evidence="1">
        <name>Zn(2+)</name>
        <dbReference type="ChEBI" id="CHEBI:29105"/>
    </cofactor>
    <text evidence="1">Binds 2 Zn(2+) ions per monomer.</text>
</comment>
<comment type="subunit">
    <text evidence="1">Homodimer.</text>
</comment>
<comment type="subcellular location">
    <subcellularLocation>
        <location evidence="1">Cytoplasm</location>
    </subcellularLocation>
</comment>
<comment type="domain">
    <text evidence="1">The J domain is necessary and sufficient to stimulate DnaK ATPase activity. Zinc center 1 plays an important role in the autonomous, DnaK-independent chaperone activity of DnaJ. Zinc center 2 is essential for interaction with DnaK and for DnaJ activity.</text>
</comment>
<comment type="similarity">
    <text evidence="1">Belongs to the DnaJ family.</text>
</comment>
<protein>
    <recommendedName>
        <fullName evidence="1">Chaperone protein DnaJ</fullName>
    </recommendedName>
</protein>
<gene>
    <name evidence="1" type="primary">dnaJ</name>
    <name type="ordered locus">YPN_0342</name>
    <name type="ORF">YP516_0349</name>
</gene>
<organism>
    <name type="scientific">Yersinia pestis bv. Antiqua (strain Nepal516)</name>
    <dbReference type="NCBI Taxonomy" id="377628"/>
    <lineage>
        <taxon>Bacteria</taxon>
        <taxon>Pseudomonadati</taxon>
        <taxon>Pseudomonadota</taxon>
        <taxon>Gammaproteobacteria</taxon>
        <taxon>Enterobacterales</taxon>
        <taxon>Yersiniaceae</taxon>
        <taxon>Yersinia</taxon>
    </lineage>
</organism>
<proteinExistence type="inferred from homology"/>
<accession>Q1CMV6</accession>
<accession>C4GNP5</accession>
<dbReference type="EMBL" id="CP000305">
    <property type="protein sequence ID" value="ABG16674.1"/>
    <property type="molecule type" value="Genomic_DNA"/>
</dbReference>
<dbReference type="EMBL" id="ACNQ01000006">
    <property type="protein sequence ID" value="EEO78127.1"/>
    <property type="molecule type" value="Genomic_DNA"/>
</dbReference>
<dbReference type="RefSeq" id="WP_002209249.1">
    <property type="nucleotide sequence ID" value="NZ_ACNQ01000006.1"/>
</dbReference>
<dbReference type="SMR" id="Q1CMV6"/>
<dbReference type="GeneID" id="57974140"/>
<dbReference type="KEGG" id="ypn:YPN_0342"/>
<dbReference type="HOGENOM" id="CLU_017633_0_7_6"/>
<dbReference type="Proteomes" id="UP000008936">
    <property type="component" value="Chromosome"/>
</dbReference>
<dbReference type="GO" id="GO:0005737">
    <property type="term" value="C:cytoplasm"/>
    <property type="evidence" value="ECO:0007669"/>
    <property type="project" value="UniProtKB-SubCell"/>
</dbReference>
<dbReference type="GO" id="GO:0005524">
    <property type="term" value="F:ATP binding"/>
    <property type="evidence" value="ECO:0007669"/>
    <property type="project" value="InterPro"/>
</dbReference>
<dbReference type="GO" id="GO:0031072">
    <property type="term" value="F:heat shock protein binding"/>
    <property type="evidence" value="ECO:0007669"/>
    <property type="project" value="InterPro"/>
</dbReference>
<dbReference type="GO" id="GO:0051082">
    <property type="term" value="F:unfolded protein binding"/>
    <property type="evidence" value="ECO:0007669"/>
    <property type="project" value="UniProtKB-UniRule"/>
</dbReference>
<dbReference type="GO" id="GO:0008270">
    <property type="term" value="F:zinc ion binding"/>
    <property type="evidence" value="ECO:0007669"/>
    <property type="project" value="UniProtKB-UniRule"/>
</dbReference>
<dbReference type="GO" id="GO:0051085">
    <property type="term" value="P:chaperone cofactor-dependent protein refolding"/>
    <property type="evidence" value="ECO:0007669"/>
    <property type="project" value="TreeGrafter"/>
</dbReference>
<dbReference type="GO" id="GO:0006260">
    <property type="term" value="P:DNA replication"/>
    <property type="evidence" value="ECO:0007669"/>
    <property type="project" value="UniProtKB-KW"/>
</dbReference>
<dbReference type="GO" id="GO:0042026">
    <property type="term" value="P:protein refolding"/>
    <property type="evidence" value="ECO:0007669"/>
    <property type="project" value="TreeGrafter"/>
</dbReference>
<dbReference type="GO" id="GO:0009408">
    <property type="term" value="P:response to heat"/>
    <property type="evidence" value="ECO:0007669"/>
    <property type="project" value="InterPro"/>
</dbReference>
<dbReference type="CDD" id="cd06257">
    <property type="entry name" value="DnaJ"/>
    <property type="match status" value="1"/>
</dbReference>
<dbReference type="CDD" id="cd10747">
    <property type="entry name" value="DnaJ_C"/>
    <property type="match status" value="1"/>
</dbReference>
<dbReference type="CDD" id="cd10719">
    <property type="entry name" value="DnaJ_zf"/>
    <property type="match status" value="1"/>
</dbReference>
<dbReference type="FunFam" id="1.10.287.110:FF:000003">
    <property type="entry name" value="Molecular chaperone DnaJ"/>
    <property type="match status" value="1"/>
</dbReference>
<dbReference type="FunFam" id="2.10.230.10:FF:000002">
    <property type="entry name" value="Molecular chaperone DnaJ"/>
    <property type="match status" value="1"/>
</dbReference>
<dbReference type="FunFam" id="2.60.260.20:FF:000004">
    <property type="entry name" value="Molecular chaperone DnaJ"/>
    <property type="match status" value="1"/>
</dbReference>
<dbReference type="Gene3D" id="1.10.287.110">
    <property type="entry name" value="DnaJ domain"/>
    <property type="match status" value="1"/>
</dbReference>
<dbReference type="Gene3D" id="2.10.230.10">
    <property type="entry name" value="Heat shock protein DnaJ, cysteine-rich domain"/>
    <property type="match status" value="1"/>
</dbReference>
<dbReference type="Gene3D" id="2.60.260.20">
    <property type="entry name" value="Urease metallochaperone UreE, N-terminal domain"/>
    <property type="match status" value="2"/>
</dbReference>
<dbReference type="HAMAP" id="MF_01152">
    <property type="entry name" value="DnaJ"/>
    <property type="match status" value="1"/>
</dbReference>
<dbReference type="InterPro" id="IPR012724">
    <property type="entry name" value="DnaJ"/>
</dbReference>
<dbReference type="InterPro" id="IPR002939">
    <property type="entry name" value="DnaJ_C"/>
</dbReference>
<dbReference type="InterPro" id="IPR001623">
    <property type="entry name" value="DnaJ_domain"/>
</dbReference>
<dbReference type="InterPro" id="IPR018253">
    <property type="entry name" value="DnaJ_domain_CS"/>
</dbReference>
<dbReference type="InterPro" id="IPR008971">
    <property type="entry name" value="HSP40/DnaJ_pept-bd"/>
</dbReference>
<dbReference type="InterPro" id="IPR001305">
    <property type="entry name" value="HSP_DnaJ_Cys-rich_dom"/>
</dbReference>
<dbReference type="InterPro" id="IPR036410">
    <property type="entry name" value="HSP_DnaJ_Cys-rich_dom_sf"/>
</dbReference>
<dbReference type="InterPro" id="IPR036869">
    <property type="entry name" value="J_dom_sf"/>
</dbReference>
<dbReference type="NCBIfam" id="TIGR02349">
    <property type="entry name" value="DnaJ_bact"/>
    <property type="match status" value="1"/>
</dbReference>
<dbReference type="NCBIfam" id="NF008035">
    <property type="entry name" value="PRK10767.1"/>
    <property type="match status" value="1"/>
</dbReference>
<dbReference type="PANTHER" id="PTHR43096:SF48">
    <property type="entry name" value="CHAPERONE PROTEIN DNAJ"/>
    <property type="match status" value="1"/>
</dbReference>
<dbReference type="PANTHER" id="PTHR43096">
    <property type="entry name" value="DNAJ HOMOLOG 1, MITOCHONDRIAL-RELATED"/>
    <property type="match status" value="1"/>
</dbReference>
<dbReference type="Pfam" id="PF00226">
    <property type="entry name" value="DnaJ"/>
    <property type="match status" value="1"/>
</dbReference>
<dbReference type="Pfam" id="PF01556">
    <property type="entry name" value="DnaJ_C"/>
    <property type="match status" value="1"/>
</dbReference>
<dbReference type="Pfam" id="PF00684">
    <property type="entry name" value="DnaJ_CXXCXGXG"/>
    <property type="match status" value="1"/>
</dbReference>
<dbReference type="PRINTS" id="PR00625">
    <property type="entry name" value="JDOMAIN"/>
</dbReference>
<dbReference type="SMART" id="SM00271">
    <property type="entry name" value="DnaJ"/>
    <property type="match status" value="1"/>
</dbReference>
<dbReference type="SUPFAM" id="SSF46565">
    <property type="entry name" value="Chaperone J-domain"/>
    <property type="match status" value="1"/>
</dbReference>
<dbReference type="SUPFAM" id="SSF57938">
    <property type="entry name" value="DnaJ/Hsp40 cysteine-rich domain"/>
    <property type="match status" value="1"/>
</dbReference>
<dbReference type="SUPFAM" id="SSF49493">
    <property type="entry name" value="HSP40/DnaJ peptide-binding domain"/>
    <property type="match status" value="2"/>
</dbReference>
<dbReference type="PROSITE" id="PS00636">
    <property type="entry name" value="DNAJ_1"/>
    <property type="match status" value="1"/>
</dbReference>
<dbReference type="PROSITE" id="PS50076">
    <property type="entry name" value="DNAJ_2"/>
    <property type="match status" value="1"/>
</dbReference>
<dbReference type="PROSITE" id="PS51188">
    <property type="entry name" value="ZF_CR"/>
    <property type="match status" value="1"/>
</dbReference>
<keyword id="KW-0143">Chaperone</keyword>
<keyword id="KW-0963">Cytoplasm</keyword>
<keyword id="KW-0235">DNA replication</keyword>
<keyword id="KW-0479">Metal-binding</keyword>
<keyword id="KW-0677">Repeat</keyword>
<keyword id="KW-0346">Stress response</keyword>
<keyword id="KW-0862">Zinc</keyword>
<keyword id="KW-0863">Zinc-finger</keyword>